<keyword id="KW-0067">ATP-binding</keyword>
<keyword id="KW-0276">Fatty acid metabolism</keyword>
<keyword id="KW-0436">Ligase</keyword>
<keyword id="KW-0443">Lipid metabolism</keyword>
<keyword id="KW-0460">Magnesium</keyword>
<keyword id="KW-0472">Membrane</keyword>
<keyword id="KW-0547">Nucleotide-binding</keyword>
<keyword id="KW-1185">Reference proteome</keyword>
<reference key="1">
    <citation type="journal article" date="2001" name="Nature">
        <title>Genome sequence of enterohaemorrhagic Escherichia coli O157:H7.</title>
        <authorList>
            <person name="Perna N.T."/>
            <person name="Plunkett G. III"/>
            <person name="Burland V."/>
            <person name="Mau B."/>
            <person name="Glasner J.D."/>
            <person name="Rose D.J."/>
            <person name="Mayhew G.F."/>
            <person name="Evans P.S."/>
            <person name="Gregor J."/>
            <person name="Kirkpatrick H.A."/>
            <person name="Posfai G."/>
            <person name="Hackett J."/>
            <person name="Klink S."/>
            <person name="Boutin A."/>
            <person name="Shao Y."/>
            <person name="Miller L."/>
            <person name="Grotbeck E.J."/>
            <person name="Davis N.W."/>
            <person name="Lim A."/>
            <person name="Dimalanta E.T."/>
            <person name="Potamousis K."/>
            <person name="Apodaca J."/>
            <person name="Anantharaman T.S."/>
            <person name="Lin J."/>
            <person name="Yen G."/>
            <person name="Schwartz D.C."/>
            <person name="Welch R.A."/>
            <person name="Blattner F.R."/>
        </authorList>
    </citation>
    <scope>NUCLEOTIDE SEQUENCE [LARGE SCALE GENOMIC DNA]</scope>
    <source>
        <strain>O157:H7 / EDL933 / ATCC 700927 / EHEC</strain>
    </source>
</reference>
<reference key="2">
    <citation type="journal article" date="2001" name="DNA Res.">
        <title>Complete genome sequence of enterohemorrhagic Escherichia coli O157:H7 and genomic comparison with a laboratory strain K-12.</title>
        <authorList>
            <person name="Hayashi T."/>
            <person name="Makino K."/>
            <person name="Ohnishi M."/>
            <person name="Kurokawa K."/>
            <person name="Ishii K."/>
            <person name="Yokoyama K."/>
            <person name="Han C.-G."/>
            <person name="Ohtsubo E."/>
            <person name="Nakayama K."/>
            <person name="Murata T."/>
            <person name="Tanaka M."/>
            <person name="Tobe T."/>
            <person name="Iida T."/>
            <person name="Takami H."/>
            <person name="Honda T."/>
            <person name="Sasakawa C."/>
            <person name="Ogasawara N."/>
            <person name="Yasunaga T."/>
            <person name="Kuhara S."/>
            <person name="Shiba T."/>
            <person name="Hattori M."/>
            <person name="Shinagawa H."/>
        </authorList>
    </citation>
    <scope>NUCLEOTIDE SEQUENCE [LARGE SCALE GENOMIC DNA]</scope>
    <source>
        <strain>O157:H7 / Sakai / RIMD 0509952 / EHEC</strain>
    </source>
</reference>
<protein>
    <recommendedName>
        <fullName>Long-chain-fatty-acid--CoA ligase</fullName>
        <ecNumber evidence="1">6.2.1.3</ecNumber>
    </recommendedName>
    <alternativeName>
        <fullName>Long-chain acyl-CoA synthetase</fullName>
        <shortName>Acyl-CoA synthetase</shortName>
    </alternativeName>
</protein>
<organism>
    <name type="scientific">Escherichia coli O157:H7</name>
    <dbReference type="NCBI Taxonomy" id="83334"/>
    <lineage>
        <taxon>Bacteria</taxon>
        <taxon>Pseudomonadati</taxon>
        <taxon>Pseudomonadota</taxon>
        <taxon>Gammaproteobacteria</taxon>
        <taxon>Enterobacterales</taxon>
        <taxon>Enterobacteriaceae</taxon>
        <taxon>Escherichia</taxon>
    </lineage>
</organism>
<feature type="chain" id="PRO_0000193127" description="Long-chain-fatty-acid--CoA ligase">
    <location>
        <begin position="1"/>
        <end position="561"/>
    </location>
</feature>
<feature type="binding site" evidence="2">
    <location>
        <begin position="213"/>
        <end position="224"/>
    </location>
    <ligand>
        <name>ATP</name>
        <dbReference type="ChEBI" id="CHEBI:30616"/>
    </ligand>
</feature>
<comment type="function">
    <text evidence="1">Catalyzes the esterification, concomitant with transport, of exogenous long-chain fatty acids into metabolically active CoA thioesters for subsequent degradation or incorporation into phospholipids.</text>
</comment>
<comment type="catalytic activity">
    <reaction evidence="1">
        <text>a long-chain fatty acid + ATP + CoA = a long-chain fatty acyl-CoA + AMP + diphosphate</text>
        <dbReference type="Rhea" id="RHEA:15421"/>
        <dbReference type="ChEBI" id="CHEBI:30616"/>
        <dbReference type="ChEBI" id="CHEBI:33019"/>
        <dbReference type="ChEBI" id="CHEBI:57287"/>
        <dbReference type="ChEBI" id="CHEBI:57560"/>
        <dbReference type="ChEBI" id="CHEBI:83139"/>
        <dbReference type="ChEBI" id="CHEBI:456215"/>
        <dbReference type="EC" id="6.2.1.3"/>
    </reaction>
</comment>
<comment type="cofactor">
    <cofactor evidence="1">
        <name>Mg(2+)</name>
        <dbReference type="ChEBI" id="CHEBI:18420"/>
    </cofactor>
</comment>
<comment type="pathway">
    <text evidence="1">Lipid metabolism; fatty acid beta-oxidation.</text>
</comment>
<comment type="subcellular location">
    <subcellularLocation>
        <location evidence="2">Membrane</location>
        <topology evidence="2">Peripheral membrane protein</topology>
    </subcellularLocation>
    <text evidence="2">Partially membrane-associated.</text>
</comment>
<comment type="miscellaneous">
    <text evidence="1">Activity is the highest with fatty acid substrates of &gt; 10 carbon atoms.</text>
</comment>
<comment type="similarity">
    <text evidence="2">Belongs to the ATP-dependent AMP-binding enzyme family.</text>
</comment>
<comment type="sequence caution" evidence="2">
    <conflict type="erroneous initiation">
        <sequence resource="EMBL-CDS" id="BAB35937"/>
    </conflict>
    <text>Extended N-terminus.</text>
</comment>
<dbReference type="EC" id="6.2.1.3" evidence="1"/>
<dbReference type="EMBL" id="AE005174">
    <property type="protein sequence ID" value="AAG56794.1"/>
    <property type="molecule type" value="Genomic_DNA"/>
</dbReference>
<dbReference type="EMBL" id="BA000007">
    <property type="protein sequence ID" value="BAB35937.2"/>
    <property type="status" value="ALT_INIT"/>
    <property type="molecule type" value="Genomic_DNA"/>
</dbReference>
<dbReference type="PIR" id="B90943">
    <property type="entry name" value="B90943"/>
</dbReference>
<dbReference type="PIR" id="F85791">
    <property type="entry name" value="F85791"/>
</dbReference>
<dbReference type="RefSeq" id="NP_310541.1">
    <property type="nucleotide sequence ID" value="NC_002695.1"/>
</dbReference>
<dbReference type="RefSeq" id="WP_001302040.1">
    <property type="nucleotide sequence ID" value="NZ_VOAI01000010.1"/>
</dbReference>
<dbReference type="SMR" id="Q8XDR6"/>
<dbReference type="STRING" id="155864.Z2848"/>
<dbReference type="GeneID" id="912449"/>
<dbReference type="KEGG" id="ece:Z2848"/>
<dbReference type="KEGG" id="ecs:ECs_2514"/>
<dbReference type="PATRIC" id="fig|386585.9.peg.2634"/>
<dbReference type="eggNOG" id="COG0318">
    <property type="taxonomic scope" value="Bacteria"/>
</dbReference>
<dbReference type="HOGENOM" id="CLU_000022_59_9_6"/>
<dbReference type="OMA" id="ICCRGYN"/>
<dbReference type="UniPathway" id="UPA00659"/>
<dbReference type="Proteomes" id="UP000000558">
    <property type="component" value="Chromosome"/>
</dbReference>
<dbReference type="Proteomes" id="UP000002519">
    <property type="component" value="Chromosome"/>
</dbReference>
<dbReference type="GO" id="GO:0016020">
    <property type="term" value="C:membrane"/>
    <property type="evidence" value="ECO:0007669"/>
    <property type="project" value="UniProtKB-SubCell"/>
</dbReference>
<dbReference type="GO" id="GO:0005524">
    <property type="term" value="F:ATP binding"/>
    <property type="evidence" value="ECO:0007669"/>
    <property type="project" value="UniProtKB-KW"/>
</dbReference>
<dbReference type="GO" id="GO:0004467">
    <property type="term" value="F:long-chain fatty acid-CoA ligase activity"/>
    <property type="evidence" value="ECO:0007669"/>
    <property type="project" value="UniProtKB-EC"/>
</dbReference>
<dbReference type="GO" id="GO:0006635">
    <property type="term" value="P:fatty acid beta-oxidation"/>
    <property type="evidence" value="ECO:0007669"/>
    <property type="project" value="UniProtKB-UniPathway"/>
</dbReference>
<dbReference type="CDD" id="cd05936">
    <property type="entry name" value="FC-FACS_FadD_like"/>
    <property type="match status" value="1"/>
</dbReference>
<dbReference type="FunFam" id="3.30.300.30:FF:000006">
    <property type="entry name" value="Long-chain-fatty-acid--CoA ligase FadD"/>
    <property type="match status" value="1"/>
</dbReference>
<dbReference type="FunFam" id="3.40.50.12780:FF:000003">
    <property type="entry name" value="Long-chain-fatty-acid--CoA ligase FadD"/>
    <property type="match status" value="1"/>
</dbReference>
<dbReference type="Gene3D" id="3.30.300.30">
    <property type="match status" value="1"/>
</dbReference>
<dbReference type="Gene3D" id="3.40.50.12780">
    <property type="entry name" value="N-terminal domain of ligase-like"/>
    <property type="match status" value="1"/>
</dbReference>
<dbReference type="InterPro" id="IPR025110">
    <property type="entry name" value="AMP-bd_C"/>
</dbReference>
<dbReference type="InterPro" id="IPR045851">
    <property type="entry name" value="AMP-bd_C_sf"/>
</dbReference>
<dbReference type="InterPro" id="IPR020845">
    <property type="entry name" value="AMP-binding_CS"/>
</dbReference>
<dbReference type="InterPro" id="IPR000873">
    <property type="entry name" value="AMP-dep_synth/lig_dom"/>
</dbReference>
<dbReference type="InterPro" id="IPR042099">
    <property type="entry name" value="ANL_N_sf"/>
</dbReference>
<dbReference type="InterPro" id="IPR050237">
    <property type="entry name" value="ATP-dep_AMP-bd_enzyme"/>
</dbReference>
<dbReference type="NCBIfam" id="NF006523">
    <property type="entry name" value="PRK08974.1"/>
    <property type="match status" value="1"/>
</dbReference>
<dbReference type="PANTHER" id="PTHR43767">
    <property type="entry name" value="LONG-CHAIN-FATTY-ACID--COA LIGASE"/>
    <property type="match status" value="1"/>
</dbReference>
<dbReference type="PANTHER" id="PTHR43767:SF8">
    <property type="entry name" value="LONG-CHAIN-FATTY-ACID--COA LIGASE"/>
    <property type="match status" value="1"/>
</dbReference>
<dbReference type="Pfam" id="PF00501">
    <property type="entry name" value="AMP-binding"/>
    <property type="match status" value="1"/>
</dbReference>
<dbReference type="Pfam" id="PF13193">
    <property type="entry name" value="AMP-binding_C"/>
    <property type="match status" value="1"/>
</dbReference>
<dbReference type="SUPFAM" id="SSF56801">
    <property type="entry name" value="Acetyl-CoA synthetase-like"/>
    <property type="match status" value="1"/>
</dbReference>
<dbReference type="PROSITE" id="PS00455">
    <property type="entry name" value="AMP_BINDING"/>
    <property type="match status" value="1"/>
</dbReference>
<gene>
    <name type="primary">fadD</name>
    <name type="synonym">oldD</name>
    <name type="ordered locus">Z2848</name>
    <name type="ordered locus">ECs2514</name>
</gene>
<name>LCFA_ECO57</name>
<accession>Q8XDR6</accession>
<sequence length="561" mass="62364">MKKVWLNRYPADVPTEINPDRYQSLVDMFEQSVARYADQPAFVNMGEVMTFRKLEERSRAFAAYLQQGLGLKKGDRVALMMPNLLQYPVALFGILRAGMIVVNVNPLYTPRELEHQLNDSGASAIVIVSNFAHTLEKVVDKTAVQHVILTRMGDQLSTAKGTLVNFVVKYIKRLVPKYHLPDAISFRSALHNGYRMQYVKPELVPEDLAFLQYTGGTTGVAKGAMLTHRNMLANLEQVNATYGPLLHPGKELVVTALPLYHIFALTINCLLFIELGGQNLLITNPRDIPGLVKELAKYPFTAITGVNTLFNALLNNKEFQQLDFSSLHLSAGGGMPVQQVVAERWVKLTGQYLLEGYGLTECAPLVSVNPYDIDYHSGSIGLPVPSTEAKLVDDDDNEVSPGQPGELCVRGPQVMLGYWQRPDATDEIIKNGWLHTGDIAVMDEEGFLRIVDRKKDMILVSGFNVYPNEIEDVVMQHPGVQEVAAVGVPSGSSGEAVKIFVVKKDPSLTEESLVTFCRRQLTGYKVPKLVEFRDELPKSNVGKILRRELRDEARGKVDNKA</sequence>
<evidence type="ECO:0000250" key="1">
    <source>
        <dbReference type="UniProtKB" id="P69451"/>
    </source>
</evidence>
<evidence type="ECO:0000305" key="2"/>
<proteinExistence type="inferred from homology"/>